<accession>B1L944</accession>
<evidence type="ECO:0000255" key="1">
    <source>
        <dbReference type="HAMAP-Rule" id="MF_01408"/>
    </source>
</evidence>
<evidence type="ECO:0000255" key="2">
    <source>
        <dbReference type="PROSITE-ProRule" id="PRU00661"/>
    </source>
</evidence>
<protein>
    <recommendedName>
        <fullName evidence="1">Flavin-dependent thymidylate synthase</fullName>
        <shortName evidence="1">FDTS</shortName>
        <ecNumber evidence="1">2.1.1.148</ecNumber>
    </recommendedName>
    <alternativeName>
        <fullName evidence="1">FAD-dependent thymidylate synthase</fullName>
    </alternativeName>
    <alternativeName>
        <fullName evidence="1">Thymidylate synthase ThyX</fullName>
        <shortName evidence="1">TS</shortName>
        <shortName evidence="1">TSase</shortName>
    </alternativeName>
</protein>
<feature type="chain" id="PRO_1000184607" description="Flavin-dependent thymidylate synthase">
    <location>
        <begin position="1"/>
        <end position="220"/>
    </location>
</feature>
<feature type="domain" description="ThyX" evidence="2">
    <location>
        <begin position="1"/>
        <end position="208"/>
    </location>
</feature>
<feature type="short sequence motif" description="ThyX motif" evidence="1">
    <location>
        <begin position="78"/>
        <end position="88"/>
    </location>
</feature>
<feature type="active site" description="Involved in ionization of N3 of dUMP, leading to its activation" evidence="1">
    <location>
        <position position="174"/>
    </location>
</feature>
<feature type="binding site" evidence="1">
    <location>
        <position position="55"/>
    </location>
    <ligand>
        <name>FAD</name>
        <dbReference type="ChEBI" id="CHEBI:57692"/>
        <note>ligand shared between neighboring subunits</note>
    </ligand>
</feature>
<feature type="binding site" evidence="1">
    <location>
        <begin position="75"/>
        <end position="78"/>
    </location>
    <ligand>
        <name>dUMP</name>
        <dbReference type="ChEBI" id="CHEBI:246422"/>
        <note>ligand shared between dimeric partners</note>
    </ligand>
</feature>
<feature type="binding site" evidence="1">
    <location>
        <begin position="78"/>
        <end position="80"/>
    </location>
    <ligand>
        <name>FAD</name>
        <dbReference type="ChEBI" id="CHEBI:57692"/>
        <note>ligand shared between neighboring subunits</note>
    </ligand>
</feature>
<feature type="binding site" description="in other chain" evidence="1">
    <location>
        <begin position="86"/>
        <end position="90"/>
    </location>
    <ligand>
        <name>dUMP</name>
        <dbReference type="ChEBI" id="CHEBI:246422"/>
        <note>ligand shared between dimeric partners</note>
    </ligand>
</feature>
<feature type="binding site" evidence="1">
    <location>
        <position position="86"/>
    </location>
    <ligand>
        <name>FAD</name>
        <dbReference type="ChEBI" id="CHEBI:57692"/>
        <note>ligand shared between neighboring subunits</note>
    </ligand>
</feature>
<feature type="binding site" description="in other chain" evidence="1">
    <location>
        <position position="147"/>
    </location>
    <ligand>
        <name>dUMP</name>
        <dbReference type="ChEBI" id="CHEBI:246422"/>
        <note>ligand shared between dimeric partners</note>
    </ligand>
</feature>
<feature type="binding site" evidence="1">
    <location>
        <begin position="163"/>
        <end position="165"/>
    </location>
    <ligand>
        <name>FAD</name>
        <dbReference type="ChEBI" id="CHEBI:57692"/>
        <note>ligand shared between neighboring subunits</note>
    </ligand>
</feature>
<feature type="binding site" evidence="1">
    <location>
        <position position="169"/>
    </location>
    <ligand>
        <name>FAD</name>
        <dbReference type="ChEBI" id="CHEBI:57692"/>
        <note>ligand shared between neighboring subunits</note>
    </ligand>
</feature>
<feature type="binding site" evidence="1">
    <location>
        <position position="174"/>
    </location>
    <ligand>
        <name>dUMP</name>
        <dbReference type="ChEBI" id="CHEBI:246422"/>
        <note>ligand shared between dimeric partners</note>
    </ligand>
</feature>
<organism>
    <name type="scientific">Thermotoga sp. (strain RQ2)</name>
    <dbReference type="NCBI Taxonomy" id="126740"/>
    <lineage>
        <taxon>Bacteria</taxon>
        <taxon>Thermotogati</taxon>
        <taxon>Thermotogota</taxon>
        <taxon>Thermotogae</taxon>
        <taxon>Thermotogales</taxon>
        <taxon>Thermotogaceae</taxon>
        <taxon>Thermotoga</taxon>
    </lineage>
</organism>
<keyword id="KW-0274">FAD</keyword>
<keyword id="KW-0285">Flavoprotein</keyword>
<keyword id="KW-0489">Methyltransferase</keyword>
<keyword id="KW-0521">NADP</keyword>
<keyword id="KW-0545">Nucleotide biosynthesis</keyword>
<keyword id="KW-0808">Transferase</keyword>
<comment type="function">
    <text evidence="1">Catalyzes the reductive methylation of 2'-deoxyuridine-5'-monophosphate (dUMP) to 2'-deoxythymidine-5'-monophosphate (dTMP) while utilizing 5,10-methylenetetrahydrofolate (mTHF) as the methyl donor, and NADPH and FADH(2) as the reductant.</text>
</comment>
<comment type="catalytic activity">
    <reaction evidence="1">
        <text>dUMP + (6R)-5,10-methylene-5,6,7,8-tetrahydrofolate + NADPH + H(+) = dTMP + (6S)-5,6,7,8-tetrahydrofolate + NADP(+)</text>
        <dbReference type="Rhea" id="RHEA:29043"/>
        <dbReference type="ChEBI" id="CHEBI:15378"/>
        <dbReference type="ChEBI" id="CHEBI:15636"/>
        <dbReference type="ChEBI" id="CHEBI:57453"/>
        <dbReference type="ChEBI" id="CHEBI:57783"/>
        <dbReference type="ChEBI" id="CHEBI:58349"/>
        <dbReference type="ChEBI" id="CHEBI:63528"/>
        <dbReference type="ChEBI" id="CHEBI:246422"/>
        <dbReference type="EC" id="2.1.1.148"/>
    </reaction>
</comment>
<comment type="cofactor">
    <cofactor evidence="1">
        <name>FAD</name>
        <dbReference type="ChEBI" id="CHEBI:57692"/>
    </cofactor>
    <text evidence="1">Binds 4 FAD per tetramer. Each FAD binding site is formed by three monomers.</text>
</comment>
<comment type="pathway">
    <text evidence="1">Pyrimidine metabolism; dTTP biosynthesis.</text>
</comment>
<comment type="subunit">
    <text evidence="1">Homotetramer.</text>
</comment>
<comment type="similarity">
    <text evidence="1">Belongs to the thymidylate synthase ThyX family.</text>
</comment>
<name>THYX_THESQ</name>
<gene>
    <name evidence="1" type="primary">thyX</name>
    <name type="ordered locus">TRQ2_0486</name>
</gene>
<sequence length="220" mass="26030">MKIDILDKGFVELVDVMGNDLSAVRAARVSFDMGLKDEERDRHLIEYLMRYGHETPFEHIVFTFHVKAPIFVARQWFRHRIASYNELSGRYSKLSYEFYIPSPERLEGYKTTIPPEQVTEKISEIVDKAYRTYLELIESGVPREVARIVLPLNLYTRFFWTVNARSLMNFLNLRADSHAQWEIQQYALAIARIFKEKCPWTFEAFLKYAYKGDILKEVQV</sequence>
<proteinExistence type="inferred from homology"/>
<reference key="1">
    <citation type="journal article" date="2011" name="J. Bacteriol.">
        <title>Genome sequence of Thermotoga sp. strain RQ2, a hyperthermophilic bacterium isolated from a geothermally heated region of the seafloor near Ribeira Quente, the Azores.</title>
        <authorList>
            <person name="Swithers K.S."/>
            <person name="DiPippo J.L."/>
            <person name="Bruce D.C."/>
            <person name="Detter C."/>
            <person name="Tapia R."/>
            <person name="Han S."/>
            <person name="Saunders E."/>
            <person name="Goodwin L.A."/>
            <person name="Han J."/>
            <person name="Woyke T."/>
            <person name="Pitluck S."/>
            <person name="Pennacchio L."/>
            <person name="Nolan M."/>
            <person name="Mikhailova N."/>
            <person name="Lykidis A."/>
            <person name="Land M.L."/>
            <person name="Brettin T."/>
            <person name="Stetter K.O."/>
            <person name="Nelson K.E."/>
            <person name="Gogarten J.P."/>
            <person name="Noll K.M."/>
        </authorList>
    </citation>
    <scope>NUCLEOTIDE SEQUENCE [LARGE SCALE GENOMIC DNA]</scope>
    <source>
        <strain>RQ2</strain>
    </source>
</reference>
<dbReference type="EC" id="2.1.1.148" evidence="1"/>
<dbReference type="EMBL" id="CP000969">
    <property type="protein sequence ID" value="ACB08842.1"/>
    <property type="molecule type" value="Genomic_DNA"/>
</dbReference>
<dbReference type="RefSeq" id="WP_012310573.1">
    <property type="nucleotide sequence ID" value="NC_010483.1"/>
</dbReference>
<dbReference type="SMR" id="B1L944"/>
<dbReference type="KEGG" id="trq:TRQ2_0486"/>
<dbReference type="HOGENOM" id="CLU_067790_0_0_0"/>
<dbReference type="UniPathway" id="UPA00575"/>
<dbReference type="Proteomes" id="UP000001687">
    <property type="component" value="Chromosome"/>
</dbReference>
<dbReference type="GO" id="GO:0050660">
    <property type="term" value="F:flavin adenine dinucleotide binding"/>
    <property type="evidence" value="ECO:0007669"/>
    <property type="project" value="InterPro"/>
</dbReference>
<dbReference type="GO" id="GO:0070402">
    <property type="term" value="F:NADPH binding"/>
    <property type="evidence" value="ECO:0007669"/>
    <property type="project" value="TreeGrafter"/>
</dbReference>
<dbReference type="GO" id="GO:0050797">
    <property type="term" value="F:thymidylate synthase (FAD) activity"/>
    <property type="evidence" value="ECO:0007669"/>
    <property type="project" value="UniProtKB-UniRule"/>
</dbReference>
<dbReference type="GO" id="GO:0004799">
    <property type="term" value="F:thymidylate synthase activity"/>
    <property type="evidence" value="ECO:0007669"/>
    <property type="project" value="TreeGrafter"/>
</dbReference>
<dbReference type="GO" id="GO:0006231">
    <property type="term" value="P:dTMP biosynthetic process"/>
    <property type="evidence" value="ECO:0007669"/>
    <property type="project" value="UniProtKB-UniRule"/>
</dbReference>
<dbReference type="GO" id="GO:0006235">
    <property type="term" value="P:dTTP biosynthetic process"/>
    <property type="evidence" value="ECO:0007669"/>
    <property type="project" value="UniProtKB-UniRule"/>
</dbReference>
<dbReference type="GO" id="GO:0032259">
    <property type="term" value="P:methylation"/>
    <property type="evidence" value="ECO:0007669"/>
    <property type="project" value="UniProtKB-KW"/>
</dbReference>
<dbReference type="CDD" id="cd20175">
    <property type="entry name" value="ThyX"/>
    <property type="match status" value="1"/>
</dbReference>
<dbReference type="Gene3D" id="3.30.1360.170">
    <property type="match status" value="1"/>
</dbReference>
<dbReference type="HAMAP" id="MF_01408">
    <property type="entry name" value="ThyX"/>
    <property type="match status" value="1"/>
</dbReference>
<dbReference type="InterPro" id="IPR003669">
    <property type="entry name" value="Thymidylate_synthase_ThyX"/>
</dbReference>
<dbReference type="InterPro" id="IPR036098">
    <property type="entry name" value="Thymidylate_synthase_ThyX_sf"/>
</dbReference>
<dbReference type="NCBIfam" id="TIGR02170">
    <property type="entry name" value="thyX"/>
    <property type="match status" value="1"/>
</dbReference>
<dbReference type="PANTHER" id="PTHR34934">
    <property type="entry name" value="FLAVIN-DEPENDENT THYMIDYLATE SYNTHASE"/>
    <property type="match status" value="1"/>
</dbReference>
<dbReference type="PANTHER" id="PTHR34934:SF1">
    <property type="entry name" value="FLAVIN-DEPENDENT THYMIDYLATE SYNTHASE"/>
    <property type="match status" value="1"/>
</dbReference>
<dbReference type="Pfam" id="PF02511">
    <property type="entry name" value="Thy1"/>
    <property type="match status" value="1"/>
</dbReference>
<dbReference type="SUPFAM" id="SSF69796">
    <property type="entry name" value="Thymidylate synthase-complementing protein Thy1"/>
    <property type="match status" value="1"/>
</dbReference>
<dbReference type="PROSITE" id="PS51331">
    <property type="entry name" value="THYX"/>
    <property type="match status" value="1"/>
</dbReference>